<comment type="subcellular location">
    <subcellularLocation>
        <location evidence="2">Mitochondrion</location>
    </subcellularLocation>
</comment>
<comment type="similarity">
    <text evidence="3">Belongs to the UPF0651 family.</text>
</comment>
<keyword id="KW-0496">Mitochondrion</keyword>
<keyword id="KW-1185">Reference proteome</keyword>
<keyword id="KW-0809">Transit peptide</keyword>
<dbReference type="EMBL" id="CU329672">
    <property type="protein sequence ID" value="CAB58368.1"/>
    <property type="molecule type" value="Genomic_DNA"/>
</dbReference>
<dbReference type="PIR" id="T41692">
    <property type="entry name" value="T41692"/>
</dbReference>
<dbReference type="RefSeq" id="NP_587858.1">
    <property type="nucleotide sequence ID" value="NM_001022851.2"/>
</dbReference>
<dbReference type="BioGRID" id="276157">
    <property type="interactions" value="5"/>
</dbReference>
<dbReference type="STRING" id="284812.Q9USH2"/>
<dbReference type="iPTMnet" id="Q9USH2"/>
<dbReference type="PaxDb" id="4896-SPCP31B10.02.1"/>
<dbReference type="EnsemblFungi" id="SPCP31B10.02.1">
    <property type="protein sequence ID" value="SPCP31B10.02.1:pep"/>
    <property type="gene ID" value="SPCP31B10.02"/>
</dbReference>
<dbReference type="KEGG" id="spo:2539599"/>
<dbReference type="PomBase" id="SPCP31B10.02"/>
<dbReference type="VEuPathDB" id="FungiDB:SPCP31B10.02"/>
<dbReference type="eggNOG" id="KOG4690">
    <property type="taxonomic scope" value="Eukaryota"/>
</dbReference>
<dbReference type="HOGENOM" id="CLU_131106_0_0_1"/>
<dbReference type="InParanoid" id="Q9USH2"/>
<dbReference type="OMA" id="GCSICVW"/>
<dbReference type="PhylomeDB" id="Q9USH2"/>
<dbReference type="PRO" id="PR:Q9USH2"/>
<dbReference type="Proteomes" id="UP000002485">
    <property type="component" value="Chromosome III"/>
</dbReference>
<dbReference type="GO" id="GO:0005739">
    <property type="term" value="C:mitochondrion"/>
    <property type="evidence" value="ECO:0007005"/>
    <property type="project" value="PomBase"/>
</dbReference>
<dbReference type="GO" id="GO:0016491">
    <property type="term" value="F:oxidoreductase activity"/>
    <property type="evidence" value="ECO:0000255"/>
    <property type="project" value="PomBase"/>
</dbReference>
<dbReference type="InterPro" id="IPR019180">
    <property type="entry name" value="Oxidoreductase-like_N"/>
</dbReference>
<dbReference type="InterPro" id="IPR039251">
    <property type="entry name" value="OXLD1"/>
</dbReference>
<dbReference type="PANTHER" id="PTHR21193">
    <property type="entry name" value="OXIDOREDUCTASE-LIKE DOMAIN-CONTAINING PROTEIN 1"/>
    <property type="match status" value="1"/>
</dbReference>
<dbReference type="PANTHER" id="PTHR21193:SF3">
    <property type="entry name" value="OXIDOREDUCTASE-LIKE DOMAIN-CONTAINING PROTEIN 1"/>
    <property type="match status" value="1"/>
</dbReference>
<dbReference type="Pfam" id="PF09791">
    <property type="entry name" value="Oxidored-like"/>
    <property type="match status" value="1"/>
</dbReference>
<feature type="transit peptide" description="Mitochondrion" evidence="1">
    <location>
        <begin position="1"/>
        <end status="unknown"/>
    </location>
</feature>
<feature type="chain" id="PRO_0000350762" description="UPF0651 protein P31B10.02, mitochondrial">
    <location>
        <begin status="unknown"/>
        <end position="143"/>
    </location>
</feature>
<feature type="domain" description="Oxidoreductase-like">
    <location>
        <begin position="48"/>
        <end position="93"/>
    </location>
</feature>
<sequence>MHLTLFKELLKQPKPKFHFEIEPNVSFLAVEEGPASLRSYSIGNVSRIYDGIRVPPKPEEPLNCCQSGCAICVWDVYADDLEEYNRARRKAKRHYLDKHLPVPPDLAKVSLKETSSLEELPPQLKAFVLLEKRLMKDKQSKNN</sequence>
<evidence type="ECO:0000255" key="1"/>
<evidence type="ECO:0000269" key="2">
    <source>
    </source>
</evidence>
<evidence type="ECO:0000305" key="3"/>
<name>YJH2_SCHPO</name>
<protein>
    <recommendedName>
        <fullName>UPF0651 protein P31B10.02, mitochondrial</fullName>
    </recommendedName>
</protein>
<proteinExistence type="inferred from homology"/>
<gene>
    <name type="ORF">SPCP31B10.02</name>
</gene>
<organism>
    <name type="scientific">Schizosaccharomyces pombe (strain 972 / ATCC 24843)</name>
    <name type="common">Fission yeast</name>
    <dbReference type="NCBI Taxonomy" id="284812"/>
    <lineage>
        <taxon>Eukaryota</taxon>
        <taxon>Fungi</taxon>
        <taxon>Dikarya</taxon>
        <taxon>Ascomycota</taxon>
        <taxon>Taphrinomycotina</taxon>
        <taxon>Schizosaccharomycetes</taxon>
        <taxon>Schizosaccharomycetales</taxon>
        <taxon>Schizosaccharomycetaceae</taxon>
        <taxon>Schizosaccharomyces</taxon>
    </lineage>
</organism>
<reference key="1">
    <citation type="journal article" date="2002" name="Nature">
        <title>The genome sequence of Schizosaccharomyces pombe.</title>
        <authorList>
            <person name="Wood V."/>
            <person name="Gwilliam R."/>
            <person name="Rajandream M.A."/>
            <person name="Lyne M.H."/>
            <person name="Lyne R."/>
            <person name="Stewart A."/>
            <person name="Sgouros J.G."/>
            <person name="Peat N."/>
            <person name="Hayles J."/>
            <person name="Baker S.G."/>
            <person name="Basham D."/>
            <person name="Bowman S."/>
            <person name="Brooks K."/>
            <person name="Brown D."/>
            <person name="Brown S."/>
            <person name="Chillingworth T."/>
            <person name="Churcher C.M."/>
            <person name="Collins M."/>
            <person name="Connor R."/>
            <person name="Cronin A."/>
            <person name="Davis P."/>
            <person name="Feltwell T."/>
            <person name="Fraser A."/>
            <person name="Gentles S."/>
            <person name="Goble A."/>
            <person name="Hamlin N."/>
            <person name="Harris D.E."/>
            <person name="Hidalgo J."/>
            <person name="Hodgson G."/>
            <person name="Holroyd S."/>
            <person name="Hornsby T."/>
            <person name="Howarth S."/>
            <person name="Huckle E.J."/>
            <person name="Hunt S."/>
            <person name="Jagels K."/>
            <person name="James K.D."/>
            <person name="Jones L."/>
            <person name="Jones M."/>
            <person name="Leather S."/>
            <person name="McDonald S."/>
            <person name="McLean J."/>
            <person name="Mooney P."/>
            <person name="Moule S."/>
            <person name="Mungall K.L."/>
            <person name="Murphy L.D."/>
            <person name="Niblett D."/>
            <person name="Odell C."/>
            <person name="Oliver K."/>
            <person name="O'Neil S."/>
            <person name="Pearson D."/>
            <person name="Quail M.A."/>
            <person name="Rabbinowitsch E."/>
            <person name="Rutherford K.M."/>
            <person name="Rutter S."/>
            <person name="Saunders D."/>
            <person name="Seeger K."/>
            <person name="Sharp S."/>
            <person name="Skelton J."/>
            <person name="Simmonds M.N."/>
            <person name="Squares R."/>
            <person name="Squares S."/>
            <person name="Stevens K."/>
            <person name="Taylor K."/>
            <person name="Taylor R.G."/>
            <person name="Tivey A."/>
            <person name="Walsh S.V."/>
            <person name="Warren T."/>
            <person name="Whitehead S."/>
            <person name="Woodward J.R."/>
            <person name="Volckaert G."/>
            <person name="Aert R."/>
            <person name="Robben J."/>
            <person name="Grymonprez B."/>
            <person name="Weltjens I."/>
            <person name="Vanstreels E."/>
            <person name="Rieger M."/>
            <person name="Schaefer M."/>
            <person name="Mueller-Auer S."/>
            <person name="Gabel C."/>
            <person name="Fuchs M."/>
            <person name="Duesterhoeft A."/>
            <person name="Fritzc C."/>
            <person name="Holzer E."/>
            <person name="Moestl D."/>
            <person name="Hilbert H."/>
            <person name="Borzym K."/>
            <person name="Langer I."/>
            <person name="Beck A."/>
            <person name="Lehrach H."/>
            <person name="Reinhardt R."/>
            <person name="Pohl T.M."/>
            <person name="Eger P."/>
            <person name="Zimmermann W."/>
            <person name="Wedler H."/>
            <person name="Wambutt R."/>
            <person name="Purnelle B."/>
            <person name="Goffeau A."/>
            <person name="Cadieu E."/>
            <person name="Dreano S."/>
            <person name="Gloux S."/>
            <person name="Lelaure V."/>
            <person name="Mottier S."/>
            <person name="Galibert F."/>
            <person name="Aves S.J."/>
            <person name="Xiang Z."/>
            <person name="Hunt C."/>
            <person name="Moore K."/>
            <person name="Hurst S.M."/>
            <person name="Lucas M."/>
            <person name="Rochet M."/>
            <person name="Gaillardin C."/>
            <person name="Tallada V.A."/>
            <person name="Garzon A."/>
            <person name="Thode G."/>
            <person name="Daga R.R."/>
            <person name="Cruzado L."/>
            <person name="Jimenez J."/>
            <person name="Sanchez M."/>
            <person name="del Rey F."/>
            <person name="Benito J."/>
            <person name="Dominguez A."/>
            <person name="Revuelta J.L."/>
            <person name="Moreno S."/>
            <person name="Armstrong J."/>
            <person name="Forsburg S.L."/>
            <person name="Cerutti L."/>
            <person name="Lowe T."/>
            <person name="McCombie W.R."/>
            <person name="Paulsen I."/>
            <person name="Potashkin J."/>
            <person name="Shpakovski G.V."/>
            <person name="Ussery D."/>
            <person name="Barrell B.G."/>
            <person name="Nurse P."/>
        </authorList>
    </citation>
    <scope>NUCLEOTIDE SEQUENCE [LARGE SCALE GENOMIC DNA]</scope>
    <source>
        <strain>972 / ATCC 24843</strain>
    </source>
</reference>
<reference key="2">
    <citation type="journal article" date="2006" name="Nat. Biotechnol.">
        <title>ORFeome cloning and global analysis of protein localization in the fission yeast Schizosaccharomyces pombe.</title>
        <authorList>
            <person name="Matsuyama A."/>
            <person name="Arai R."/>
            <person name="Yashiroda Y."/>
            <person name="Shirai A."/>
            <person name="Kamata A."/>
            <person name="Sekido S."/>
            <person name="Kobayashi Y."/>
            <person name="Hashimoto A."/>
            <person name="Hamamoto M."/>
            <person name="Hiraoka Y."/>
            <person name="Horinouchi S."/>
            <person name="Yoshida M."/>
        </authorList>
    </citation>
    <scope>SUBCELLULAR LOCATION [LARGE SCALE ANALYSIS]</scope>
</reference>
<accession>Q9USH2</accession>